<proteinExistence type="inferred from homology"/>
<accession>Q7U8J1</accession>
<reference key="1">
    <citation type="journal article" date="2003" name="Nature">
        <title>The genome of a motile marine Synechococcus.</title>
        <authorList>
            <person name="Palenik B."/>
            <person name="Brahamsha B."/>
            <person name="Larimer F.W."/>
            <person name="Land M.L."/>
            <person name="Hauser L."/>
            <person name="Chain P."/>
            <person name="Lamerdin J.E."/>
            <person name="Regala W."/>
            <person name="Allen E.E."/>
            <person name="McCarren J."/>
            <person name="Paulsen I.T."/>
            <person name="Dufresne A."/>
            <person name="Partensky F."/>
            <person name="Webb E.A."/>
            <person name="Waterbury J."/>
        </authorList>
    </citation>
    <scope>NUCLEOTIDE SEQUENCE [LARGE SCALE GENOMIC DNA]</scope>
    <source>
        <strain>WH8102</strain>
    </source>
</reference>
<name>RSMG_PARMW</name>
<comment type="function">
    <text evidence="1">Specifically methylates the N7 position of a guanine in 16S rRNA.</text>
</comment>
<comment type="subcellular location">
    <subcellularLocation>
        <location evidence="1">Cytoplasm</location>
    </subcellularLocation>
</comment>
<comment type="similarity">
    <text evidence="1">Belongs to the methyltransferase superfamily. RNA methyltransferase RsmG family.</text>
</comment>
<evidence type="ECO:0000255" key="1">
    <source>
        <dbReference type="HAMAP-Rule" id="MF_00074"/>
    </source>
</evidence>
<keyword id="KW-0963">Cytoplasm</keyword>
<keyword id="KW-0489">Methyltransferase</keyword>
<keyword id="KW-0698">rRNA processing</keyword>
<keyword id="KW-0949">S-adenosyl-L-methionine</keyword>
<keyword id="KW-0808">Transferase</keyword>
<sequence length="248" mass="27040">MQQHPMPDSLPGAAFWEALGWTPEPAQLGQLKALQDLLRSWNSRVNLTRLVEGDDYWINQVFDSLWPLQTELRSPHQSRLAIDVGTGGGFPGLAVAIAMPGARMTLLDSVGRKTAAVQAMVNDLGLSDRVSVRTDRIESAGHDRTLRGGFDLAMARAVAAAPVVAEYLVPLLKPDGNALLYRGQWGDTDLRQLKRALVPLNAQLSSSQHCQLPAERGVRHLIRLQPVSPCPRQFPRAVGVPSRQPLGG</sequence>
<protein>
    <recommendedName>
        <fullName evidence="1">Ribosomal RNA small subunit methyltransferase G</fullName>
        <ecNumber evidence="1">2.1.1.-</ecNumber>
    </recommendedName>
    <alternativeName>
        <fullName evidence="1">16S rRNA 7-methylguanosine methyltransferase</fullName>
        <shortName evidence="1">16S rRNA m7G methyltransferase</shortName>
    </alternativeName>
</protein>
<dbReference type="EC" id="2.1.1.-" evidence="1"/>
<dbReference type="EMBL" id="BX569690">
    <property type="protein sequence ID" value="CAE07141.1"/>
    <property type="molecule type" value="Genomic_DNA"/>
</dbReference>
<dbReference type="SMR" id="Q7U8J1"/>
<dbReference type="STRING" id="84588.SYNW0626"/>
<dbReference type="KEGG" id="syw:SYNW0626"/>
<dbReference type="eggNOG" id="COG0357">
    <property type="taxonomic scope" value="Bacteria"/>
</dbReference>
<dbReference type="HOGENOM" id="CLU_065341_0_2_3"/>
<dbReference type="Proteomes" id="UP000001422">
    <property type="component" value="Chromosome"/>
</dbReference>
<dbReference type="GO" id="GO:0005829">
    <property type="term" value="C:cytosol"/>
    <property type="evidence" value="ECO:0007669"/>
    <property type="project" value="TreeGrafter"/>
</dbReference>
<dbReference type="GO" id="GO:0070043">
    <property type="term" value="F:rRNA (guanine-N7-)-methyltransferase activity"/>
    <property type="evidence" value="ECO:0007669"/>
    <property type="project" value="UniProtKB-UniRule"/>
</dbReference>
<dbReference type="Gene3D" id="3.40.50.150">
    <property type="entry name" value="Vaccinia Virus protein VP39"/>
    <property type="match status" value="1"/>
</dbReference>
<dbReference type="HAMAP" id="MF_00074">
    <property type="entry name" value="16SrRNA_methyltr_G"/>
    <property type="match status" value="1"/>
</dbReference>
<dbReference type="InterPro" id="IPR003682">
    <property type="entry name" value="rRNA_ssu_MeTfrase_G"/>
</dbReference>
<dbReference type="InterPro" id="IPR029063">
    <property type="entry name" value="SAM-dependent_MTases_sf"/>
</dbReference>
<dbReference type="NCBIfam" id="TIGR00138">
    <property type="entry name" value="rsmG_gidB"/>
    <property type="match status" value="1"/>
</dbReference>
<dbReference type="PANTHER" id="PTHR31760">
    <property type="entry name" value="S-ADENOSYL-L-METHIONINE-DEPENDENT METHYLTRANSFERASES SUPERFAMILY PROTEIN"/>
    <property type="match status" value="1"/>
</dbReference>
<dbReference type="PANTHER" id="PTHR31760:SF0">
    <property type="entry name" value="S-ADENOSYL-L-METHIONINE-DEPENDENT METHYLTRANSFERASES SUPERFAMILY PROTEIN"/>
    <property type="match status" value="1"/>
</dbReference>
<dbReference type="Pfam" id="PF02527">
    <property type="entry name" value="GidB"/>
    <property type="match status" value="1"/>
</dbReference>
<dbReference type="PIRSF" id="PIRSF003078">
    <property type="entry name" value="GidB"/>
    <property type="match status" value="1"/>
</dbReference>
<dbReference type="SUPFAM" id="SSF53335">
    <property type="entry name" value="S-adenosyl-L-methionine-dependent methyltransferases"/>
    <property type="match status" value="1"/>
</dbReference>
<organism>
    <name type="scientific">Parasynechococcus marenigrum (strain WH8102)</name>
    <dbReference type="NCBI Taxonomy" id="84588"/>
    <lineage>
        <taxon>Bacteria</taxon>
        <taxon>Bacillati</taxon>
        <taxon>Cyanobacteriota</taxon>
        <taxon>Cyanophyceae</taxon>
        <taxon>Synechococcales</taxon>
        <taxon>Prochlorococcaceae</taxon>
        <taxon>Parasynechococcus</taxon>
        <taxon>Parasynechococcus marenigrum</taxon>
    </lineage>
</organism>
<gene>
    <name evidence="1" type="primary">rsmG</name>
    <name type="ordered locus">SYNW0626</name>
</gene>
<feature type="chain" id="PRO_0000184353" description="Ribosomal RNA small subunit methyltransferase G">
    <location>
        <begin position="1"/>
        <end position="248"/>
    </location>
</feature>
<feature type="binding site" evidence="1">
    <location>
        <position position="85"/>
    </location>
    <ligand>
        <name>S-adenosyl-L-methionine</name>
        <dbReference type="ChEBI" id="CHEBI:59789"/>
    </ligand>
</feature>
<feature type="binding site" evidence="1">
    <location>
        <position position="90"/>
    </location>
    <ligand>
        <name>S-adenosyl-L-methionine</name>
        <dbReference type="ChEBI" id="CHEBI:59789"/>
    </ligand>
</feature>
<feature type="binding site" evidence="1">
    <location>
        <begin position="137"/>
        <end position="138"/>
    </location>
    <ligand>
        <name>S-adenosyl-L-methionine</name>
        <dbReference type="ChEBI" id="CHEBI:59789"/>
    </ligand>
</feature>
<feature type="binding site" evidence="1">
    <location>
        <position position="156"/>
    </location>
    <ligand>
        <name>S-adenosyl-L-methionine</name>
        <dbReference type="ChEBI" id="CHEBI:59789"/>
    </ligand>
</feature>